<geneLocation type="chloroplast"/>
<sequence length="37" mass="4071">MVEPLLSGIVLGMITVSALGLFVAAYLQYRRGNQFEI</sequence>
<keyword id="KW-0150">Chloroplast</keyword>
<keyword id="KW-0249">Electron transport</keyword>
<keyword id="KW-0472">Membrane</keyword>
<keyword id="KW-0602">Photosynthesis</keyword>
<keyword id="KW-0934">Plastid</keyword>
<keyword id="KW-0793">Thylakoid</keyword>
<keyword id="KW-0812">Transmembrane</keyword>
<keyword id="KW-1133">Transmembrane helix</keyword>
<keyword id="KW-0813">Transport</keyword>
<reference key="1">
    <citation type="journal article" date="1995" name="Plant Mol. Biol. Rep.">
        <title>The chloroplast genome of a chlorophyll a+c-containing alga, Odontella sinensis.</title>
        <authorList>
            <person name="Kowallik K.V."/>
            <person name="Stoebe B."/>
            <person name="Schaffran I."/>
            <person name="Kroth-Pancic P."/>
            <person name="Freier U."/>
        </authorList>
    </citation>
    <scope>NUCLEOTIDE SEQUENCE [LARGE SCALE GENOMIC DNA]</scope>
</reference>
<gene>
    <name evidence="1" type="primary">petG</name>
</gene>
<protein>
    <recommendedName>
        <fullName evidence="1">Cytochrome b6-f complex subunit 5</fullName>
    </recommendedName>
    <alternativeName>
        <fullName evidence="1">Cytochrome b6-f complex subunit PetG</fullName>
    </alternativeName>
    <alternativeName>
        <fullName evidence="1">Cytochrome b6-f complex subunit V</fullName>
    </alternativeName>
</protein>
<accession>P49470</accession>
<dbReference type="EMBL" id="Z67753">
    <property type="protein sequence ID" value="CAA91724.1"/>
    <property type="molecule type" value="Genomic_DNA"/>
</dbReference>
<dbReference type="PIR" id="S78351">
    <property type="entry name" value="S78351"/>
</dbReference>
<dbReference type="RefSeq" id="NP_043692.1">
    <property type="nucleotide sequence ID" value="NC_001713.1"/>
</dbReference>
<dbReference type="SMR" id="P49470"/>
<dbReference type="GeneID" id="801774"/>
<dbReference type="GO" id="GO:0009535">
    <property type="term" value="C:chloroplast thylakoid membrane"/>
    <property type="evidence" value="ECO:0007669"/>
    <property type="project" value="UniProtKB-SubCell"/>
</dbReference>
<dbReference type="GO" id="GO:0009512">
    <property type="term" value="C:cytochrome b6f complex"/>
    <property type="evidence" value="ECO:0007669"/>
    <property type="project" value="InterPro"/>
</dbReference>
<dbReference type="GO" id="GO:0045158">
    <property type="term" value="F:electron transporter, transferring electrons within cytochrome b6/f complex of photosystem II activity"/>
    <property type="evidence" value="ECO:0007669"/>
    <property type="project" value="UniProtKB-UniRule"/>
</dbReference>
<dbReference type="GO" id="GO:0017004">
    <property type="term" value="P:cytochrome complex assembly"/>
    <property type="evidence" value="ECO:0007669"/>
    <property type="project" value="UniProtKB-UniRule"/>
</dbReference>
<dbReference type="GO" id="GO:0015979">
    <property type="term" value="P:photosynthesis"/>
    <property type="evidence" value="ECO:0007669"/>
    <property type="project" value="UniProtKB-KW"/>
</dbReference>
<dbReference type="HAMAP" id="MF_00432">
    <property type="entry name" value="Cytb6_f_PetG"/>
    <property type="match status" value="1"/>
</dbReference>
<dbReference type="InterPro" id="IPR003683">
    <property type="entry name" value="Cyt_6/f_cplx_su5"/>
</dbReference>
<dbReference type="InterPro" id="IPR036099">
    <property type="entry name" value="Cyt_6/f_cplx_su5_sf"/>
</dbReference>
<dbReference type="NCBIfam" id="NF001907">
    <property type="entry name" value="PRK00665.1"/>
    <property type="match status" value="1"/>
</dbReference>
<dbReference type="Pfam" id="PF02529">
    <property type="entry name" value="PetG"/>
    <property type="match status" value="1"/>
</dbReference>
<dbReference type="PIRSF" id="PIRSF000034">
    <property type="entry name" value="Cyt_b6-f_V"/>
    <property type="match status" value="1"/>
</dbReference>
<dbReference type="SUPFAM" id="SSF103446">
    <property type="entry name" value="PetG subunit of the cytochrome b6f complex"/>
    <property type="match status" value="1"/>
</dbReference>
<name>PETG_TRICV</name>
<comment type="function">
    <text evidence="1">Component of the cytochrome b6-f complex, which mediates electron transfer between photosystem II (PSII) and photosystem I (PSI), cyclic electron flow around PSI, and state transitions. PetG is required for either the stability or assembly of the cytochrome b6-f complex.</text>
</comment>
<comment type="subunit">
    <text evidence="1">The 4 large subunits of the cytochrome b6-f complex are cytochrome b6, subunit IV (17 kDa polypeptide, PetD), cytochrome f and the Rieske protein, while the 4 small subunits are PetG, PetL, PetM and PetN. The complex functions as a dimer.</text>
</comment>
<comment type="subcellular location">
    <subcellularLocation>
        <location evidence="1">Plastid</location>
        <location evidence="1">Chloroplast thylakoid membrane</location>
        <topology evidence="1">Single-pass membrane protein</topology>
    </subcellularLocation>
</comment>
<comment type="similarity">
    <text evidence="1">Belongs to the PetG family.</text>
</comment>
<feature type="chain" id="PRO_0000216392" description="Cytochrome b6-f complex subunit 5">
    <location>
        <begin position="1"/>
        <end position="37"/>
    </location>
</feature>
<feature type="transmembrane region" description="Helical" evidence="1">
    <location>
        <begin position="5"/>
        <end position="25"/>
    </location>
</feature>
<evidence type="ECO:0000255" key="1">
    <source>
        <dbReference type="HAMAP-Rule" id="MF_00432"/>
    </source>
</evidence>
<proteinExistence type="inferred from homology"/>
<organism>
    <name type="scientific">Trieres chinensis</name>
    <name type="common">Marine centric diatom</name>
    <name type="synonym">Odontella sinensis</name>
    <dbReference type="NCBI Taxonomy" id="1514140"/>
    <lineage>
        <taxon>Eukaryota</taxon>
        <taxon>Sar</taxon>
        <taxon>Stramenopiles</taxon>
        <taxon>Ochrophyta</taxon>
        <taxon>Bacillariophyta</taxon>
        <taxon>Mediophyceae</taxon>
        <taxon>Biddulphiophycidae</taxon>
        <taxon>Eupodiscales</taxon>
        <taxon>Parodontellaceae</taxon>
        <taxon>Trieres</taxon>
    </lineage>
</organism>